<comment type="function">
    <text evidence="2">Modulates the O-glycosylation and complex N-glycosylation steps occurring during the Golgi maturation of APP. Inhibits APP transport to the cell surface and further shedding.</text>
</comment>
<comment type="interaction">
    <interactant intactId="EBI-21513659">
        <id>Q9UK28</id>
    </interactant>
    <interactant intactId="EBI-2866431">
        <id>Q9Y287</id>
        <label>ITM2B</label>
    </interactant>
    <organismsDiffer>false</organismsDiffer>
    <experiments>3</experiments>
</comment>
<comment type="subcellular location">
    <subcellularLocation>
        <location evidence="4">Golgi apparatus membrane</location>
        <topology evidence="4">Single-pass type I membrane protein</topology>
    </subcellularLocation>
</comment>
<comment type="tissue specificity">
    <text>Expressed preferentially at high level in the brain.</text>
</comment>
<comment type="similarity">
    <text evidence="3">Belongs to the TMEM59 family.</text>
</comment>
<accession>Q9UK28</accession>
<dbReference type="EMBL" id="AF186264">
    <property type="protein sequence ID" value="AAF00529.1"/>
    <property type="molecule type" value="mRNA"/>
</dbReference>
<dbReference type="EMBL" id="BC010446">
    <property type="protein sequence ID" value="AAH10446.1"/>
    <property type="molecule type" value="mRNA"/>
</dbReference>
<dbReference type="CCDS" id="CCDS12383.1"/>
<dbReference type="PIR" id="JC7110">
    <property type="entry name" value="JC7110"/>
</dbReference>
<dbReference type="RefSeq" id="NP_036241.1">
    <property type="nucleotide sequence ID" value="NM_012109.3"/>
</dbReference>
<dbReference type="BioGRID" id="117322">
    <property type="interactions" value="53"/>
</dbReference>
<dbReference type="FunCoup" id="Q9UK28">
    <property type="interactions" value="413"/>
</dbReference>
<dbReference type="IntAct" id="Q9UK28">
    <property type="interactions" value="39"/>
</dbReference>
<dbReference type="STRING" id="9606.ENSP00000470879"/>
<dbReference type="TCDB" id="8.A.84.1.1">
    <property type="family name" value="the insulin secretion regulator tmem59 (tmem59) family"/>
</dbReference>
<dbReference type="GlyCosmos" id="Q9UK28">
    <property type="glycosylation" value="1 site, No reported glycans"/>
</dbReference>
<dbReference type="GlyGen" id="Q9UK28">
    <property type="glycosylation" value="1 site, 1 N-linked glycan (1 site)"/>
</dbReference>
<dbReference type="iPTMnet" id="Q9UK28"/>
<dbReference type="PhosphoSitePlus" id="Q9UK28"/>
<dbReference type="BioMuta" id="TMEM59L"/>
<dbReference type="DMDM" id="18203502"/>
<dbReference type="jPOST" id="Q9UK28"/>
<dbReference type="MassIVE" id="Q9UK28"/>
<dbReference type="PaxDb" id="9606-ENSP00000470879"/>
<dbReference type="PeptideAtlas" id="Q9UK28"/>
<dbReference type="ProteomicsDB" id="84711"/>
<dbReference type="Antibodypedia" id="2303">
    <property type="antibodies" value="105 antibodies from 23 providers"/>
</dbReference>
<dbReference type="DNASU" id="25789"/>
<dbReference type="Ensembl" id="ENST00000262817.8">
    <property type="protein sequence ID" value="ENSP00000262817.3"/>
    <property type="gene ID" value="ENSG00000105696.9"/>
</dbReference>
<dbReference type="Ensembl" id="ENST00000600490.5">
    <property type="protein sequence ID" value="ENSP00000470879.1"/>
    <property type="gene ID" value="ENSG00000105696.9"/>
</dbReference>
<dbReference type="GeneID" id="25789"/>
<dbReference type="KEGG" id="hsa:25789"/>
<dbReference type="MANE-Select" id="ENST00000262817.8">
    <property type="protein sequence ID" value="ENSP00000262817.3"/>
    <property type="RefSeq nucleotide sequence ID" value="NM_012109.3"/>
    <property type="RefSeq protein sequence ID" value="NP_036241.1"/>
</dbReference>
<dbReference type="UCSC" id="uc002njy.5">
    <property type="organism name" value="human"/>
</dbReference>
<dbReference type="AGR" id="HGNC:13237"/>
<dbReference type="CTD" id="25789"/>
<dbReference type="DisGeNET" id="25789"/>
<dbReference type="GeneCards" id="TMEM59L"/>
<dbReference type="HGNC" id="HGNC:13237">
    <property type="gene designation" value="TMEM59L"/>
</dbReference>
<dbReference type="HPA" id="ENSG00000105696">
    <property type="expression patterns" value="Tissue enriched (brain)"/>
</dbReference>
<dbReference type="neXtProt" id="NX_Q9UK28"/>
<dbReference type="OpenTargets" id="ENSG00000105696"/>
<dbReference type="PharmGKB" id="PA162406615"/>
<dbReference type="VEuPathDB" id="HostDB:ENSG00000105696"/>
<dbReference type="eggNOG" id="ENOG502S08T">
    <property type="taxonomic scope" value="Eukaryota"/>
</dbReference>
<dbReference type="GeneTree" id="ENSGT00390000008279"/>
<dbReference type="HOGENOM" id="CLU_059747_0_0_1"/>
<dbReference type="InParanoid" id="Q9UK28"/>
<dbReference type="OMA" id="DNAHKVN"/>
<dbReference type="OrthoDB" id="6371519at2759"/>
<dbReference type="PAN-GO" id="Q9UK28">
    <property type="GO annotations" value="0 GO annotations based on evolutionary models"/>
</dbReference>
<dbReference type="PhylomeDB" id="Q9UK28"/>
<dbReference type="TreeFam" id="TF331226"/>
<dbReference type="PathwayCommons" id="Q9UK28"/>
<dbReference type="SignaLink" id="Q9UK28"/>
<dbReference type="BioGRID-ORCS" id="25789">
    <property type="hits" value="11 hits in 1142 CRISPR screens"/>
</dbReference>
<dbReference type="ChiTaRS" id="TMEM59L">
    <property type="organism name" value="human"/>
</dbReference>
<dbReference type="GenomeRNAi" id="25789"/>
<dbReference type="Pharos" id="Q9UK28">
    <property type="development level" value="Tbio"/>
</dbReference>
<dbReference type="PRO" id="PR:Q9UK28"/>
<dbReference type="Proteomes" id="UP000005640">
    <property type="component" value="Chromosome 19"/>
</dbReference>
<dbReference type="RNAct" id="Q9UK28">
    <property type="molecule type" value="protein"/>
</dbReference>
<dbReference type="Bgee" id="ENSG00000105696">
    <property type="expression patterns" value="Expressed in right hemisphere of cerebellum and 125 other cell types or tissues"/>
</dbReference>
<dbReference type="ExpressionAtlas" id="Q9UK28">
    <property type="expression patterns" value="baseline and differential"/>
</dbReference>
<dbReference type="GO" id="GO:0000139">
    <property type="term" value="C:Golgi membrane"/>
    <property type="evidence" value="ECO:0007669"/>
    <property type="project" value="UniProtKB-SubCell"/>
</dbReference>
<dbReference type="GO" id="GO:0016020">
    <property type="term" value="C:membrane"/>
    <property type="evidence" value="ECO:0000304"/>
    <property type="project" value="ProtInc"/>
</dbReference>
<dbReference type="GO" id="GO:0001658">
    <property type="term" value="P:branching involved in ureteric bud morphogenesis"/>
    <property type="evidence" value="ECO:0007669"/>
    <property type="project" value="Ensembl"/>
</dbReference>
<dbReference type="InterPro" id="IPR022065">
    <property type="entry name" value="Uncharacterised_TMEM59"/>
</dbReference>
<dbReference type="PANTHER" id="PTHR28652:SF1">
    <property type="entry name" value="TRANSMEMBRANE PROTEIN 59-LIKE"/>
    <property type="match status" value="1"/>
</dbReference>
<dbReference type="PANTHER" id="PTHR28652">
    <property type="entry name" value="TRANSMEMBRANE PROTEIN 59-LIKE PROTEIN"/>
    <property type="match status" value="1"/>
</dbReference>
<dbReference type="Pfam" id="PF12280">
    <property type="entry name" value="BSMAP"/>
    <property type="match status" value="1"/>
</dbReference>
<reference key="1">
    <citation type="journal article" date="1999" name="Biochem. Biophys. Res. Commun.">
        <title>BSMAP, a novel protein expressed specifically in the brain whose gene is localized on chromosome 19p12.</title>
        <authorList>
            <person name="Elson G.C.A."/>
            <person name="Benoit de Coignac A."/>
            <person name="Aubry J.-P."/>
            <person name="Delneste Y."/>
            <person name="Magistrelli G."/>
            <person name="Holzwarth J."/>
            <person name="Bonnefoy J.-Y."/>
            <person name="Gauchat J.-F."/>
        </authorList>
    </citation>
    <scope>NUCLEOTIDE SEQUENCE [MRNA]</scope>
</reference>
<reference key="2">
    <citation type="journal article" date="2004" name="Genome Res.">
        <title>The status, quality, and expansion of the NIH full-length cDNA project: the Mammalian Gene Collection (MGC).</title>
        <authorList>
            <consortium name="The MGC Project Team"/>
        </authorList>
    </citation>
    <scope>NUCLEOTIDE SEQUENCE [LARGE SCALE MRNA]</scope>
    <source>
        <tissue>Brain</tissue>
    </source>
</reference>
<reference key="3">
    <citation type="journal article" date="2010" name="J. Biol. Chem.">
        <title>The novel membrane protein TMEM59 modulates complex glycosylation, cell surface expression, and secretion of the amyloid precursor protein.</title>
        <authorList>
            <person name="Ullrich S."/>
            <person name="Munch A."/>
            <person name="Neumann S."/>
            <person name="Kremmer E."/>
            <person name="Tatzelt J."/>
            <person name="Lichtenthaler S.F."/>
        </authorList>
    </citation>
    <scope>FUNCTION</scope>
    <scope>SUBCELLULAR LOCATION</scope>
</reference>
<feature type="signal peptide" evidence="1">
    <location>
        <begin position="1"/>
        <end position="24"/>
    </location>
</feature>
<feature type="chain" id="PRO_0000003000" description="Transmembrane protein 59-like">
    <location>
        <begin position="25"/>
        <end position="342"/>
    </location>
</feature>
<feature type="transmembrane region" description="Helical" evidence="1">
    <location>
        <begin position="268"/>
        <end position="290"/>
    </location>
</feature>
<feature type="short sequence motif" description="Microbody targeting signal" evidence="1">
    <location>
        <begin position="340"/>
        <end position="342"/>
    </location>
</feature>
<feature type="glycosylation site" description="N-linked (GlcNAc...) asparagine" evidence="1">
    <location>
        <position position="97"/>
    </location>
</feature>
<sequence length="342" mass="37619">MAAVALMPPPLLLLLLLASPPAASAPSARDPFAPQLGDTQNCQLRCRDRDLGPQPSQAGLEGASESPYDRAVLISACERGCRLFSICRFVARSSKPNATQTECEAACVEAYVKEAEQQACSHGCWSQPAEPEPEQKRKVLEAPSGALSLLDLFSTLCNDLVNSAQGFVSSTWTYYLQTDNGKVVVFQTQPIVESLGFQGGRLQRVEVTWRGSHPEALEVHVDPVGPLDKVRKAKIRVKTSSKAKVESEEPQDNDFLSCMSRRSGLPRWILACCLFLSVLVMLWLSCSTLVTAPGQHLKFQPLTLEQHKGFMMEPDWPLYPPPSHACEDSLPPYKLKLDLTKL</sequence>
<protein>
    <recommendedName>
        <fullName>Transmembrane protein 59-like</fullName>
    </recommendedName>
    <alternativeName>
        <fullName>Brain-specific membrane-anchored protein</fullName>
    </alternativeName>
</protein>
<evidence type="ECO:0000255" key="1"/>
<evidence type="ECO:0000269" key="2">
    <source>
    </source>
</evidence>
<evidence type="ECO:0000305" key="3"/>
<evidence type="ECO:0000305" key="4">
    <source>
    </source>
</evidence>
<name>TM59L_HUMAN</name>
<organism>
    <name type="scientific">Homo sapiens</name>
    <name type="common">Human</name>
    <dbReference type="NCBI Taxonomy" id="9606"/>
    <lineage>
        <taxon>Eukaryota</taxon>
        <taxon>Metazoa</taxon>
        <taxon>Chordata</taxon>
        <taxon>Craniata</taxon>
        <taxon>Vertebrata</taxon>
        <taxon>Euteleostomi</taxon>
        <taxon>Mammalia</taxon>
        <taxon>Eutheria</taxon>
        <taxon>Euarchontoglires</taxon>
        <taxon>Primates</taxon>
        <taxon>Haplorrhini</taxon>
        <taxon>Catarrhini</taxon>
        <taxon>Hominidae</taxon>
        <taxon>Homo</taxon>
    </lineage>
</organism>
<keyword id="KW-0325">Glycoprotein</keyword>
<keyword id="KW-0333">Golgi apparatus</keyword>
<keyword id="KW-0472">Membrane</keyword>
<keyword id="KW-1267">Proteomics identification</keyword>
<keyword id="KW-1185">Reference proteome</keyword>
<keyword id="KW-0732">Signal</keyword>
<keyword id="KW-0812">Transmembrane</keyword>
<keyword id="KW-1133">Transmembrane helix</keyword>
<gene>
    <name type="primary">TMEM59L</name>
    <name type="synonym">BSMAP</name>
    <name type="synonym">C19orf4</name>
</gene>
<proteinExistence type="evidence at protein level"/>